<name>KPYK_MYCIT</name>
<evidence type="ECO:0000250" key="1"/>
<evidence type="ECO:0000250" key="2">
    <source>
        <dbReference type="UniProtKB" id="P14618"/>
    </source>
</evidence>
<evidence type="ECO:0000305" key="3"/>
<feature type="chain" id="PRO_0000112080" description="Pyruvate kinase">
    <location>
        <begin position="1"/>
        <end position="472"/>
    </location>
</feature>
<feature type="binding site" evidence="1">
    <location>
        <position position="33"/>
    </location>
    <ligand>
        <name>substrate</name>
    </ligand>
</feature>
<feature type="binding site" evidence="2">
    <location>
        <begin position="35"/>
        <end position="38"/>
    </location>
    <ligand>
        <name>ATP</name>
        <dbReference type="ChEBI" id="CHEBI:30616"/>
    </ligand>
</feature>
<feature type="binding site" evidence="1">
    <location>
        <position position="35"/>
    </location>
    <ligand>
        <name>K(+)</name>
        <dbReference type="ChEBI" id="CHEBI:29103"/>
    </ligand>
</feature>
<feature type="binding site" evidence="1">
    <location>
        <position position="37"/>
    </location>
    <ligand>
        <name>K(+)</name>
        <dbReference type="ChEBI" id="CHEBI:29103"/>
    </ligand>
</feature>
<feature type="binding site" evidence="1">
    <location>
        <position position="67"/>
    </location>
    <ligand>
        <name>K(+)</name>
        <dbReference type="ChEBI" id="CHEBI:29103"/>
    </ligand>
</feature>
<feature type="binding site" evidence="2">
    <location>
        <position position="74"/>
    </location>
    <ligand>
        <name>ATP</name>
        <dbReference type="ChEBI" id="CHEBI:30616"/>
    </ligand>
</feature>
<feature type="binding site" evidence="2">
    <location>
        <position position="155"/>
    </location>
    <ligand>
        <name>ATP</name>
        <dbReference type="ChEBI" id="CHEBI:30616"/>
    </ligand>
</feature>
<feature type="binding site" evidence="1">
    <location>
        <position position="220"/>
    </location>
    <ligand>
        <name>Mg(2+)</name>
        <dbReference type="ChEBI" id="CHEBI:18420"/>
    </ligand>
</feature>
<feature type="binding site" evidence="1">
    <location>
        <position position="243"/>
    </location>
    <ligand>
        <name>substrate</name>
    </ligand>
</feature>
<feature type="binding site" evidence="1">
    <location>
        <position position="244"/>
    </location>
    <ligand>
        <name>Mg(2+)</name>
        <dbReference type="ChEBI" id="CHEBI:18420"/>
    </ligand>
</feature>
<feature type="binding site" evidence="1">
    <location>
        <position position="244"/>
    </location>
    <ligand>
        <name>substrate</name>
    </ligand>
</feature>
<feature type="binding site" evidence="1">
    <location>
        <position position="276"/>
    </location>
    <ligand>
        <name>substrate</name>
    </ligand>
</feature>
<feature type="site" description="Transition state stabilizer" evidence="1">
    <location>
        <position position="218"/>
    </location>
</feature>
<dbReference type="EC" id="2.7.1.40"/>
<dbReference type="EMBL" id="U65430">
    <property type="protein sequence ID" value="AAB39214.1"/>
    <property type="molecule type" value="Genomic_DNA"/>
</dbReference>
<dbReference type="SMR" id="P94939"/>
<dbReference type="UniPathway" id="UPA00109">
    <property type="reaction ID" value="UER00188"/>
</dbReference>
<dbReference type="GO" id="GO:0005524">
    <property type="term" value="F:ATP binding"/>
    <property type="evidence" value="ECO:0007669"/>
    <property type="project" value="UniProtKB-KW"/>
</dbReference>
<dbReference type="GO" id="GO:0016301">
    <property type="term" value="F:kinase activity"/>
    <property type="evidence" value="ECO:0007669"/>
    <property type="project" value="UniProtKB-KW"/>
</dbReference>
<dbReference type="GO" id="GO:0000287">
    <property type="term" value="F:magnesium ion binding"/>
    <property type="evidence" value="ECO:0007669"/>
    <property type="project" value="InterPro"/>
</dbReference>
<dbReference type="GO" id="GO:0030955">
    <property type="term" value="F:potassium ion binding"/>
    <property type="evidence" value="ECO:0007669"/>
    <property type="project" value="InterPro"/>
</dbReference>
<dbReference type="GO" id="GO:0004743">
    <property type="term" value="F:pyruvate kinase activity"/>
    <property type="evidence" value="ECO:0007669"/>
    <property type="project" value="UniProtKB-EC"/>
</dbReference>
<dbReference type="FunFam" id="2.40.33.10:FF:000001">
    <property type="entry name" value="Pyruvate kinase"/>
    <property type="match status" value="1"/>
</dbReference>
<dbReference type="FunFam" id="3.40.1380.20:FF:000009">
    <property type="entry name" value="Pyruvate kinase"/>
    <property type="match status" value="1"/>
</dbReference>
<dbReference type="Gene3D" id="3.20.20.60">
    <property type="entry name" value="Phosphoenolpyruvate-binding domains"/>
    <property type="match status" value="1"/>
</dbReference>
<dbReference type="Gene3D" id="2.40.33.10">
    <property type="entry name" value="PK beta-barrel domain-like"/>
    <property type="match status" value="1"/>
</dbReference>
<dbReference type="Gene3D" id="3.40.1380.20">
    <property type="entry name" value="Pyruvate kinase, C-terminal domain"/>
    <property type="match status" value="1"/>
</dbReference>
<dbReference type="InterPro" id="IPR001697">
    <property type="entry name" value="Pyr_Knase"/>
</dbReference>
<dbReference type="InterPro" id="IPR015813">
    <property type="entry name" value="Pyrv/PenolPyrv_kinase-like_dom"/>
</dbReference>
<dbReference type="InterPro" id="IPR040442">
    <property type="entry name" value="Pyrv_kinase-like_dom_sf"/>
</dbReference>
<dbReference type="InterPro" id="IPR011037">
    <property type="entry name" value="Pyrv_Knase-like_insert_dom_sf"/>
</dbReference>
<dbReference type="InterPro" id="IPR018209">
    <property type="entry name" value="Pyrv_Knase_AS"/>
</dbReference>
<dbReference type="InterPro" id="IPR015793">
    <property type="entry name" value="Pyrv_Knase_brl"/>
</dbReference>
<dbReference type="InterPro" id="IPR015795">
    <property type="entry name" value="Pyrv_Knase_C"/>
</dbReference>
<dbReference type="InterPro" id="IPR036918">
    <property type="entry name" value="Pyrv_Knase_C_sf"/>
</dbReference>
<dbReference type="InterPro" id="IPR015806">
    <property type="entry name" value="Pyrv_Knase_insert_dom_sf"/>
</dbReference>
<dbReference type="NCBIfam" id="NF004491">
    <property type="entry name" value="PRK05826.1"/>
    <property type="match status" value="1"/>
</dbReference>
<dbReference type="NCBIfam" id="NF004886">
    <property type="entry name" value="PRK06247.1"/>
    <property type="match status" value="1"/>
</dbReference>
<dbReference type="NCBIfam" id="NF004978">
    <property type="entry name" value="PRK06354.1"/>
    <property type="match status" value="1"/>
</dbReference>
<dbReference type="NCBIfam" id="TIGR01064">
    <property type="entry name" value="pyruv_kin"/>
    <property type="match status" value="1"/>
</dbReference>
<dbReference type="PANTHER" id="PTHR11817">
    <property type="entry name" value="PYRUVATE KINASE"/>
    <property type="match status" value="1"/>
</dbReference>
<dbReference type="Pfam" id="PF00224">
    <property type="entry name" value="PK"/>
    <property type="match status" value="1"/>
</dbReference>
<dbReference type="Pfam" id="PF02887">
    <property type="entry name" value="PK_C"/>
    <property type="match status" value="1"/>
</dbReference>
<dbReference type="PRINTS" id="PR01050">
    <property type="entry name" value="PYRUVTKNASE"/>
</dbReference>
<dbReference type="SUPFAM" id="SSF51621">
    <property type="entry name" value="Phosphoenolpyruvate/pyruvate domain"/>
    <property type="match status" value="1"/>
</dbReference>
<dbReference type="SUPFAM" id="SSF50800">
    <property type="entry name" value="PK beta-barrel domain-like"/>
    <property type="match status" value="1"/>
</dbReference>
<dbReference type="SUPFAM" id="SSF52935">
    <property type="entry name" value="PK C-terminal domain-like"/>
    <property type="match status" value="1"/>
</dbReference>
<dbReference type="PROSITE" id="PS00110">
    <property type="entry name" value="PYRUVATE_KINASE"/>
    <property type="match status" value="1"/>
</dbReference>
<gene>
    <name type="primary">pyk</name>
    <name type="synonym">pykF</name>
</gene>
<proteinExistence type="inferred from homology"/>
<accession>P94939</accession>
<comment type="catalytic activity">
    <reaction>
        <text>pyruvate + ATP = phosphoenolpyruvate + ADP + H(+)</text>
        <dbReference type="Rhea" id="RHEA:18157"/>
        <dbReference type="ChEBI" id="CHEBI:15361"/>
        <dbReference type="ChEBI" id="CHEBI:15378"/>
        <dbReference type="ChEBI" id="CHEBI:30616"/>
        <dbReference type="ChEBI" id="CHEBI:58702"/>
        <dbReference type="ChEBI" id="CHEBI:456216"/>
        <dbReference type="EC" id="2.7.1.40"/>
    </reaction>
</comment>
<comment type="cofactor">
    <cofactor>
        <name>Mg(2+)</name>
        <dbReference type="ChEBI" id="CHEBI:18420"/>
    </cofactor>
</comment>
<comment type="cofactor">
    <cofactor>
        <name>K(+)</name>
        <dbReference type="ChEBI" id="CHEBI:29103"/>
    </cofactor>
</comment>
<comment type="pathway">
    <text>Carbohydrate degradation; glycolysis; pyruvate from D-glyceraldehyde 3-phosphate: step 5/5.</text>
</comment>
<comment type="subunit">
    <text evidence="1">Homotetramer.</text>
</comment>
<comment type="similarity">
    <text evidence="3">Belongs to the pyruvate kinase family.</text>
</comment>
<organism>
    <name type="scientific">Mycobacterium intracellulare</name>
    <dbReference type="NCBI Taxonomy" id="1767"/>
    <lineage>
        <taxon>Bacteria</taxon>
        <taxon>Bacillati</taxon>
        <taxon>Actinomycetota</taxon>
        <taxon>Actinomycetes</taxon>
        <taxon>Mycobacteriales</taxon>
        <taxon>Mycobacteriaceae</taxon>
        <taxon>Mycobacterium</taxon>
        <taxon>Mycobacterium avium complex (MAC)</taxon>
    </lineage>
</organism>
<reference key="1">
    <citation type="submission" date="1996-07" db="EMBL/GenBank/DDBJ databases">
        <authorList>
            <person name="Alavi M.R."/>
            <person name="Rouse D.A."/>
            <person name="Morris S.L."/>
        </authorList>
    </citation>
    <scope>NUCLEOTIDE SEQUENCE [GENOMIC DNA]</scope>
    <source>
        <strain>Batty</strain>
    </source>
</reference>
<keyword id="KW-0067">ATP-binding</keyword>
<keyword id="KW-0324">Glycolysis</keyword>
<keyword id="KW-0418">Kinase</keyword>
<keyword id="KW-0460">Magnesium</keyword>
<keyword id="KW-0479">Metal-binding</keyword>
<keyword id="KW-0547">Nucleotide-binding</keyword>
<keyword id="KW-0630">Potassium</keyword>
<keyword id="KW-0670">Pyruvate</keyword>
<keyword id="KW-0808">Transferase</keyword>
<protein>
    <recommendedName>
        <fullName>Pyruvate kinase</fullName>
        <shortName>PK</shortName>
        <ecNumber>2.7.1.40</ecNumber>
    </recommendedName>
</protein>
<sequence length="472" mass="50462">MSRRGKIVCTLGPATNSDELILALVEAGMDVARLNFSHGDYADHKAAYERVRVASDATGRAVGVLADLQGPKIRLGRFATGPTYWADGETVRITVADCEGSHDRVSTTYKKLAEDAAVGDRVLVDDGKVCLVVDGIEGDDVICTVVEGGPVSNNKGISLPGMNVSAPALSEKDIEDLTFALDLGVDLVALSFVRSPADVELVHEVMDRVGRRVPVIAKLEKPEAVDNLETIVLAFDAIMVARGDLGVELPLEEVPLVQKRAIQMARENAKPVIVATQMLDSMIENSRPTRAEASDVANAVLDGADAVMLSGETSVGKYPMAAVRTMSRIICAVEDNSTAAPPLTHVPRTKRGVISYAARDIGERLDAKALVAFTQSGDTVKRLARLHTPLPLLAFTAWPEVRSQLAMTWGTETFIVPMMTSTGGMIRQVDKSLLELGRYKRGDLVVIVAGAPPGTVGSTNLIHVHRIGEDDV</sequence>